<proteinExistence type="evidence at protein level"/>
<reference key="1">
    <citation type="journal article" date="1995" name="FEBS Lett.">
        <title>Molecular and enzymatic characterization of two stilbene synthases from Eastern white pine (Pinus strobus). A single Arg/His difference determines the activity and the pH dependence of the enzymes.</title>
        <authorList>
            <person name="Raiber S."/>
            <person name="Schroeder G."/>
            <person name="Schroeder J."/>
        </authorList>
    </citation>
    <scope>NUCLEOTIDE SEQUENCE [MRNA]</scope>
    <scope>FUNCTION</scope>
    <scope>CATALYTIC ACTIVITY</scope>
    <scope>BIOPHYSICOCHEMICAL PROPERTIES</scope>
</reference>
<sequence length="396" mass="43080">MSVGMGIDLEAFRKSQRADGFASILAIGTANPPNVVDQSTYPDYYFRVTNNEDNTDLKDKFKRICERSAIKKRHMYLTEEILKKNPELCAFLEVPSLDTRQAMLAAEVPRLGKEAAEKAIEEWGQPKSRITHLIFCTTTTPDLPGADFEVAKLLGLHPSVKRVGVFQHGCFAGGTVLRLAKDLAENNRGARVLVVCSENTAVTFRGPSETHLDGLVGLALFGDGASALIVGADPIPQVEKPCFEIVWTAQTVVPNSDGAISGKLREVGLTFQLKGAVPDLISTNIEKCLVEAFSQFNISDWNQLFWIAHPGGHAILDQVEASLNLDPTKLRATRHVMSEYGNMSSACVHFILDETRKASRQNGCSTSGGGFQMGVLFGFGPGLTVETVVLKSIPFP</sequence>
<name>DPS1_PINST</name>
<feature type="chain" id="PRO_0000216076" description="Pinosylvin synthase 1">
    <location>
        <begin position="1"/>
        <end position="396"/>
    </location>
</feature>
<feature type="active site" evidence="2">
    <location>
        <position position="170"/>
    </location>
</feature>
<feature type="binding site" evidence="1">
    <location>
        <begin position="60"/>
        <end position="63"/>
    </location>
    <ligand>
        <name>substrate</name>
    </ligand>
</feature>
<feature type="binding site" evidence="1">
    <location>
        <position position="273"/>
    </location>
    <ligand>
        <name>substrate</name>
    </ligand>
</feature>
<feature type="binding site" evidence="1">
    <location>
        <begin position="311"/>
        <end position="313"/>
    </location>
    <ligand>
        <name>substrate</name>
    </ligand>
</feature>
<feature type="site" description="Responsible for the different enzymatic properties of STS1 and STS2">
    <location>
        <position position="313"/>
    </location>
</feature>
<gene>
    <name evidence="4" type="primary">STS1</name>
</gene>
<accession>P48407</accession>
<comment type="function">
    <text evidence="3">Catalyzes the production of pinosylvin from cinnamoyl-CoA and malonyl-CoA, and dihydropinosylvin from dihydrocinnamoyl-CoA.</text>
</comment>
<comment type="catalytic activity">
    <reaction evidence="3">
        <text>(E)-cinnamoyl-CoA + 3 malonyl-CoA + 3 H(+) = (E)-pinosylvin + 4 CO2 + 4 CoA</text>
        <dbReference type="Rhea" id="RHEA:12552"/>
        <dbReference type="ChEBI" id="CHEBI:15378"/>
        <dbReference type="ChEBI" id="CHEBI:16526"/>
        <dbReference type="ChEBI" id="CHEBI:17323"/>
        <dbReference type="ChEBI" id="CHEBI:57252"/>
        <dbReference type="ChEBI" id="CHEBI:57287"/>
        <dbReference type="ChEBI" id="CHEBI:57384"/>
        <dbReference type="EC" id="2.3.1.146"/>
    </reaction>
</comment>
<comment type="catalytic activity">
    <reaction evidence="3">
        <text>3-phenylpropanoyl-CoA + 3 malonyl-CoA + 3 H(+) = dihydropinosylvin + 4 CO2 + 4 CoA</text>
        <dbReference type="Rhea" id="RHEA:46096"/>
        <dbReference type="ChEBI" id="CHEBI:4579"/>
        <dbReference type="ChEBI" id="CHEBI:15378"/>
        <dbReference type="ChEBI" id="CHEBI:16526"/>
        <dbReference type="ChEBI" id="CHEBI:57287"/>
        <dbReference type="ChEBI" id="CHEBI:57384"/>
        <dbReference type="ChEBI" id="CHEBI:85676"/>
    </reaction>
</comment>
<comment type="biophysicochemical properties">
    <phDependence>
        <text evidence="3">Optimum pH is 6.</text>
    </phDependence>
</comment>
<comment type="pathway">
    <text>Phytoalexin biosynthesis; pinosylvin biosynthesis.</text>
</comment>
<comment type="subunit">
    <text evidence="1">Homodimer.</text>
</comment>
<comment type="subcellular location">
    <subcellularLocation>
        <location>Cytoplasm</location>
    </subcellularLocation>
</comment>
<comment type="induction">
    <text>By stress.</text>
</comment>
<comment type="miscellaneous">
    <text evidence="3">STS1 has only 3-5% of the activity of STS2 and synthesizes a second unknown product with cinnamoyl-CoA.</text>
</comment>
<comment type="similarity">
    <text evidence="5">Belongs to the thiolase-like superfamily. Chalcone/stilbene synthases family.</text>
</comment>
<dbReference type="EC" id="2.3.1.146" evidence="3"/>
<dbReference type="EMBL" id="Z46914">
    <property type="protein sequence ID" value="CAA87012.1"/>
    <property type="molecule type" value="mRNA"/>
</dbReference>
<dbReference type="PIR" id="S68772">
    <property type="entry name" value="S68772"/>
</dbReference>
<dbReference type="SMR" id="P48407"/>
<dbReference type="KEGG" id="ag:CAA87012"/>
<dbReference type="BioCyc" id="MetaCyc:MONOMER-11732"/>
<dbReference type="UniPathway" id="UPA00373"/>
<dbReference type="GO" id="GO:0005737">
    <property type="term" value="C:cytoplasm"/>
    <property type="evidence" value="ECO:0007669"/>
    <property type="project" value="UniProtKB-SubCell"/>
</dbReference>
<dbReference type="GO" id="GO:0050198">
    <property type="term" value="F:pinosylvin synthase activity"/>
    <property type="evidence" value="ECO:0007669"/>
    <property type="project" value="UniProtKB-EC"/>
</dbReference>
<dbReference type="GO" id="GO:0030639">
    <property type="term" value="P:polyketide biosynthetic process"/>
    <property type="evidence" value="ECO:0007669"/>
    <property type="project" value="TreeGrafter"/>
</dbReference>
<dbReference type="CDD" id="cd00831">
    <property type="entry name" value="CHS_like"/>
    <property type="match status" value="1"/>
</dbReference>
<dbReference type="FunFam" id="3.40.47.10:FF:000014">
    <property type="entry name" value="Chalcone synthase 1"/>
    <property type="match status" value="1"/>
</dbReference>
<dbReference type="FunFam" id="3.40.47.10:FF:000025">
    <property type="entry name" value="Chalcone synthase 2"/>
    <property type="match status" value="1"/>
</dbReference>
<dbReference type="Gene3D" id="3.40.47.10">
    <property type="match status" value="2"/>
</dbReference>
<dbReference type="InterPro" id="IPR012328">
    <property type="entry name" value="Chalcone/stilbene_synt_C"/>
</dbReference>
<dbReference type="InterPro" id="IPR001099">
    <property type="entry name" value="Chalcone/stilbene_synt_N"/>
</dbReference>
<dbReference type="InterPro" id="IPR018088">
    <property type="entry name" value="Chalcone/stilbene_synthase_AS"/>
</dbReference>
<dbReference type="InterPro" id="IPR011141">
    <property type="entry name" value="Polyketide_synthase_type-III"/>
</dbReference>
<dbReference type="InterPro" id="IPR016039">
    <property type="entry name" value="Thiolase-like"/>
</dbReference>
<dbReference type="PANTHER" id="PTHR11877:SF14">
    <property type="entry name" value="CHALCONE SYNTHASE"/>
    <property type="match status" value="1"/>
</dbReference>
<dbReference type="PANTHER" id="PTHR11877">
    <property type="entry name" value="HYDROXYMETHYLGLUTARYL-COA SYNTHASE"/>
    <property type="match status" value="1"/>
</dbReference>
<dbReference type="Pfam" id="PF02797">
    <property type="entry name" value="Chal_sti_synt_C"/>
    <property type="match status" value="1"/>
</dbReference>
<dbReference type="Pfam" id="PF00195">
    <property type="entry name" value="Chal_sti_synt_N"/>
    <property type="match status" value="1"/>
</dbReference>
<dbReference type="PIRSF" id="PIRSF000451">
    <property type="entry name" value="PKS_III"/>
    <property type="match status" value="1"/>
</dbReference>
<dbReference type="SUPFAM" id="SSF53901">
    <property type="entry name" value="Thiolase-like"/>
    <property type="match status" value="2"/>
</dbReference>
<dbReference type="PROSITE" id="PS00441">
    <property type="entry name" value="CHALCONE_SYNTH"/>
    <property type="match status" value="1"/>
</dbReference>
<protein>
    <recommendedName>
        <fullName evidence="4">Pinosylvin synthase 1</fullName>
        <ecNumber evidence="3">2.3.1.146</ecNumber>
    </recommendedName>
    <alternativeName>
        <fullName>Dihydropinosylvin synthase 1</fullName>
    </alternativeName>
    <alternativeName>
        <fullName evidence="4">Stilbene synthase 1</fullName>
        <shortName>STS 1</shortName>
    </alternativeName>
</protein>
<organism>
    <name type="scientific">Pinus strobus</name>
    <name type="common">Eastern white pine</name>
    <dbReference type="NCBI Taxonomy" id="3348"/>
    <lineage>
        <taxon>Eukaryota</taxon>
        <taxon>Viridiplantae</taxon>
        <taxon>Streptophyta</taxon>
        <taxon>Embryophyta</taxon>
        <taxon>Tracheophyta</taxon>
        <taxon>Spermatophyta</taxon>
        <taxon>Pinopsida</taxon>
        <taxon>Pinidae</taxon>
        <taxon>Conifers I</taxon>
        <taxon>Pinales</taxon>
        <taxon>Pinaceae</taxon>
        <taxon>Pinus</taxon>
        <taxon>Pinus subgen. Strobus</taxon>
    </lineage>
</organism>
<evidence type="ECO:0000250" key="1"/>
<evidence type="ECO:0000255" key="2">
    <source>
        <dbReference type="PROSITE-ProRule" id="PRU10023"/>
    </source>
</evidence>
<evidence type="ECO:0000269" key="3">
    <source>
    </source>
</evidence>
<evidence type="ECO:0000303" key="4">
    <source>
    </source>
</evidence>
<evidence type="ECO:0000305" key="5"/>
<keyword id="KW-0012">Acyltransferase</keyword>
<keyword id="KW-0963">Cytoplasm</keyword>
<keyword id="KW-0346">Stress response</keyword>
<keyword id="KW-0808">Transferase</keyword>